<protein>
    <recommendedName>
        <fullName evidence="1">Membrane-bound lytic murein transglycosylase C</fullName>
        <ecNumber evidence="1">4.2.2.n1</ecNumber>
    </recommendedName>
    <alternativeName>
        <fullName evidence="1">Murein lyase C</fullName>
    </alternativeName>
</protein>
<name>MLTC_EDWI9</name>
<comment type="function">
    <text evidence="1">Murein-degrading enzyme. May play a role in recycling of muropeptides during cell elongation and/or cell division.</text>
</comment>
<comment type="catalytic activity">
    <reaction evidence="1">
        <text>Exolytic cleavage of the (1-&gt;4)-beta-glycosidic linkage between N-acetylmuramic acid (MurNAc) and N-acetylglucosamine (GlcNAc) residues in peptidoglycan, from either the reducing or the non-reducing ends of the peptidoglycan chains, with concomitant formation of a 1,6-anhydrobond in the MurNAc residue.</text>
        <dbReference type="EC" id="4.2.2.n1"/>
    </reaction>
</comment>
<comment type="subcellular location">
    <subcellularLocation>
        <location evidence="1">Cell outer membrane</location>
        <topology evidence="1">Lipid-anchor</topology>
    </subcellularLocation>
</comment>
<comment type="similarity">
    <text evidence="1">Belongs to the transglycosylase Slt family.</text>
</comment>
<reference key="1">
    <citation type="submission" date="2009-03" db="EMBL/GenBank/DDBJ databases">
        <title>Complete genome sequence of Edwardsiella ictaluri 93-146.</title>
        <authorList>
            <person name="Williams M.L."/>
            <person name="Gillaspy A.F."/>
            <person name="Dyer D.W."/>
            <person name="Thune R.L."/>
            <person name="Waldbieser G.C."/>
            <person name="Schuster S.C."/>
            <person name="Gipson J."/>
            <person name="Zaitshik J."/>
            <person name="Landry C."/>
            <person name="Lawrence M.L."/>
        </authorList>
    </citation>
    <scope>NUCLEOTIDE SEQUENCE [LARGE SCALE GENOMIC DNA]</scope>
    <source>
        <strain>93-146</strain>
    </source>
</reference>
<feature type="signal peptide" evidence="1">
    <location>
        <begin position="1"/>
        <end position="16"/>
    </location>
</feature>
<feature type="chain" id="PRO_1000215729" description="Membrane-bound lytic murein transglycosylase C">
    <location>
        <begin position="17"/>
        <end position="359"/>
    </location>
</feature>
<feature type="lipid moiety-binding region" description="N-palmitoyl cysteine" evidence="1">
    <location>
        <position position="17"/>
    </location>
</feature>
<feature type="lipid moiety-binding region" description="S-diacylglycerol cysteine" evidence="1">
    <location>
        <position position="17"/>
    </location>
</feature>
<organism>
    <name type="scientific">Edwardsiella ictaluri (strain 93-146)</name>
    <dbReference type="NCBI Taxonomy" id="634503"/>
    <lineage>
        <taxon>Bacteria</taxon>
        <taxon>Pseudomonadati</taxon>
        <taxon>Pseudomonadota</taxon>
        <taxon>Gammaproteobacteria</taxon>
        <taxon>Enterobacterales</taxon>
        <taxon>Hafniaceae</taxon>
        <taxon>Edwardsiella</taxon>
    </lineage>
</organism>
<evidence type="ECO:0000255" key="1">
    <source>
        <dbReference type="HAMAP-Rule" id="MF_01616"/>
    </source>
</evidence>
<keyword id="KW-0998">Cell outer membrane</keyword>
<keyword id="KW-0961">Cell wall biogenesis/degradation</keyword>
<keyword id="KW-0449">Lipoprotein</keyword>
<keyword id="KW-0456">Lyase</keyword>
<keyword id="KW-0472">Membrane</keyword>
<keyword id="KW-0564">Palmitate</keyword>
<keyword id="KW-0732">Signal</keyword>
<dbReference type="EC" id="4.2.2.n1" evidence="1"/>
<dbReference type="EMBL" id="CP001600">
    <property type="protein sequence ID" value="ACR67512.1"/>
    <property type="molecule type" value="Genomic_DNA"/>
</dbReference>
<dbReference type="RefSeq" id="WP_015869721.1">
    <property type="nucleotide sequence ID" value="NZ_CP169062.1"/>
</dbReference>
<dbReference type="SMR" id="C5BCE9"/>
<dbReference type="STRING" id="67780.B6E78_12455"/>
<dbReference type="CAZy" id="GH23">
    <property type="family name" value="Glycoside Hydrolase Family 23"/>
</dbReference>
<dbReference type="GeneID" id="69537365"/>
<dbReference type="KEGG" id="eic:NT01EI_0270"/>
<dbReference type="PATRIC" id="fig|634503.3.peg.242"/>
<dbReference type="HOGENOM" id="CLU_044583_0_0_6"/>
<dbReference type="Proteomes" id="UP000001485">
    <property type="component" value="Chromosome"/>
</dbReference>
<dbReference type="GO" id="GO:0009279">
    <property type="term" value="C:cell outer membrane"/>
    <property type="evidence" value="ECO:0007669"/>
    <property type="project" value="UniProtKB-SubCell"/>
</dbReference>
<dbReference type="GO" id="GO:0016798">
    <property type="term" value="F:hydrolase activity, acting on glycosyl bonds"/>
    <property type="evidence" value="ECO:0007669"/>
    <property type="project" value="InterPro"/>
</dbReference>
<dbReference type="GO" id="GO:0008933">
    <property type="term" value="F:peptidoglycan lytic transglycosylase activity"/>
    <property type="evidence" value="ECO:0007669"/>
    <property type="project" value="UniProtKB-UniRule"/>
</dbReference>
<dbReference type="GO" id="GO:0016998">
    <property type="term" value="P:cell wall macromolecule catabolic process"/>
    <property type="evidence" value="ECO:0007669"/>
    <property type="project" value="UniProtKB-UniRule"/>
</dbReference>
<dbReference type="GO" id="GO:0071555">
    <property type="term" value="P:cell wall organization"/>
    <property type="evidence" value="ECO:0007669"/>
    <property type="project" value="UniProtKB-KW"/>
</dbReference>
<dbReference type="GO" id="GO:0000270">
    <property type="term" value="P:peptidoglycan metabolic process"/>
    <property type="evidence" value="ECO:0007669"/>
    <property type="project" value="InterPro"/>
</dbReference>
<dbReference type="CDD" id="cd16893">
    <property type="entry name" value="LT_MltC_MltE"/>
    <property type="match status" value="1"/>
</dbReference>
<dbReference type="FunFam" id="1.10.530.10:FF:000002">
    <property type="entry name" value="Membrane-bound lytic murein transglycosylase C"/>
    <property type="match status" value="1"/>
</dbReference>
<dbReference type="Gene3D" id="1.10.530.10">
    <property type="match status" value="1"/>
</dbReference>
<dbReference type="HAMAP" id="MF_01616">
    <property type="entry name" value="MltC"/>
    <property type="match status" value="1"/>
</dbReference>
<dbReference type="InterPro" id="IPR023346">
    <property type="entry name" value="Lysozyme-like_dom_sf"/>
</dbReference>
<dbReference type="InterPro" id="IPR023664">
    <property type="entry name" value="Murein_transglycosylaseC"/>
</dbReference>
<dbReference type="InterPro" id="IPR024570">
    <property type="entry name" value="Murein_transglycosylaseC_N"/>
</dbReference>
<dbReference type="InterPro" id="IPR000189">
    <property type="entry name" value="Transglyc_AS"/>
</dbReference>
<dbReference type="InterPro" id="IPR008258">
    <property type="entry name" value="Transglycosylase_SLT_dom_1"/>
</dbReference>
<dbReference type="NCBIfam" id="NF008670">
    <property type="entry name" value="PRK11671.1"/>
    <property type="match status" value="1"/>
</dbReference>
<dbReference type="PANTHER" id="PTHR37423:SF2">
    <property type="entry name" value="MEMBRANE-BOUND LYTIC MUREIN TRANSGLYCOSYLASE C"/>
    <property type="match status" value="1"/>
</dbReference>
<dbReference type="PANTHER" id="PTHR37423">
    <property type="entry name" value="SOLUBLE LYTIC MUREIN TRANSGLYCOSYLASE-RELATED"/>
    <property type="match status" value="1"/>
</dbReference>
<dbReference type="Pfam" id="PF11873">
    <property type="entry name" value="Mltc_N"/>
    <property type="match status" value="1"/>
</dbReference>
<dbReference type="Pfam" id="PF01464">
    <property type="entry name" value="SLT"/>
    <property type="match status" value="1"/>
</dbReference>
<dbReference type="SUPFAM" id="SSF53955">
    <property type="entry name" value="Lysozyme-like"/>
    <property type="match status" value="1"/>
</dbReference>
<dbReference type="PROSITE" id="PS51257">
    <property type="entry name" value="PROKAR_LIPOPROTEIN"/>
    <property type="match status" value="1"/>
</dbReference>
<dbReference type="PROSITE" id="PS00922">
    <property type="entry name" value="TRANSGLYCOSYLASE"/>
    <property type="match status" value="1"/>
</dbReference>
<gene>
    <name evidence="1" type="primary">mltC</name>
    <name type="ordered locus">NT01EI_0270</name>
</gene>
<sequence>MKKVLALALIAPLLISCSGKKPDSNGEEYIKDTNGFDILMGQFAHNIENIWGINEVLIAGPKDYVKYSDRYLTRSHINFETGQITIETIATLNPAETLRQAIVTTLLMGDDPSSIDLYSDANDIKPSREPFLYGQVLDNTGQPIRWSGRANSFADYLLQNKLMKRTSGLHVIYSVTIQLVPNHLDKRAHKYLDMVRRASERYGVDESLILAIMQTESSFNPYAVSRSDALGLMQVMQHTAGKDVFVSKGKWGTPSRSYLFDPEKNIDTGTAYLAILQNTYLGGIQNTTSRRYAVITAYNGGAGSVLRIFSSDKGQAVNIINQMSPGDVYEALTQRHPSAESRRYLYKVNNTQKNYRRIR</sequence>
<accession>C5BCE9</accession>
<proteinExistence type="inferred from homology"/>